<gene>
    <name evidence="1" type="primary">murC</name>
    <name type="ordered locus">Sfum_3470</name>
</gene>
<accession>A0LNY9</accession>
<protein>
    <recommendedName>
        <fullName evidence="1">UDP-N-acetylmuramate--L-alanine ligase</fullName>
        <ecNumber evidence="1">6.3.2.8</ecNumber>
    </recommendedName>
    <alternativeName>
        <fullName evidence="1">UDP-N-acetylmuramoyl-L-alanine synthetase</fullName>
    </alternativeName>
</protein>
<evidence type="ECO:0000255" key="1">
    <source>
        <dbReference type="HAMAP-Rule" id="MF_00046"/>
    </source>
</evidence>
<name>MURC_SYNFM</name>
<dbReference type="EC" id="6.3.2.8" evidence="1"/>
<dbReference type="EMBL" id="CP000478">
    <property type="protein sequence ID" value="ABK19141.1"/>
    <property type="molecule type" value="Genomic_DNA"/>
</dbReference>
<dbReference type="RefSeq" id="WP_011700266.1">
    <property type="nucleotide sequence ID" value="NC_008554.1"/>
</dbReference>
<dbReference type="SMR" id="A0LNY9"/>
<dbReference type="FunCoup" id="A0LNY9">
    <property type="interactions" value="319"/>
</dbReference>
<dbReference type="STRING" id="335543.Sfum_3470"/>
<dbReference type="KEGG" id="sfu:Sfum_3470"/>
<dbReference type="eggNOG" id="COG0773">
    <property type="taxonomic scope" value="Bacteria"/>
</dbReference>
<dbReference type="HOGENOM" id="CLU_028104_2_2_7"/>
<dbReference type="InParanoid" id="A0LNY9"/>
<dbReference type="OrthoDB" id="9804126at2"/>
<dbReference type="UniPathway" id="UPA00219"/>
<dbReference type="Proteomes" id="UP000001784">
    <property type="component" value="Chromosome"/>
</dbReference>
<dbReference type="GO" id="GO:0005737">
    <property type="term" value="C:cytoplasm"/>
    <property type="evidence" value="ECO:0007669"/>
    <property type="project" value="UniProtKB-SubCell"/>
</dbReference>
<dbReference type="GO" id="GO:0005524">
    <property type="term" value="F:ATP binding"/>
    <property type="evidence" value="ECO:0007669"/>
    <property type="project" value="UniProtKB-UniRule"/>
</dbReference>
<dbReference type="GO" id="GO:0008763">
    <property type="term" value="F:UDP-N-acetylmuramate-L-alanine ligase activity"/>
    <property type="evidence" value="ECO:0007669"/>
    <property type="project" value="UniProtKB-UniRule"/>
</dbReference>
<dbReference type="GO" id="GO:0051301">
    <property type="term" value="P:cell division"/>
    <property type="evidence" value="ECO:0007669"/>
    <property type="project" value="UniProtKB-KW"/>
</dbReference>
<dbReference type="GO" id="GO:0071555">
    <property type="term" value="P:cell wall organization"/>
    <property type="evidence" value="ECO:0007669"/>
    <property type="project" value="UniProtKB-KW"/>
</dbReference>
<dbReference type="GO" id="GO:0009252">
    <property type="term" value="P:peptidoglycan biosynthetic process"/>
    <property type="evidence" value="ECO:0007669"/>
    <property type="project" value="UniProtKB-UniRule"/>
</dbReference>
<dbReference type="GO" id="GO:0008360">
    <property type="term" value="P:regulation of cell shape"/>
    <property type="evidence" value="ECO:0007669"/>
    <property type="project" value="UniProtKB-KW"/>
</dbReference>
<dbReference type="Gene3D" id="3.90.190.20">
    <property type="entry name" value="Mur ligase, C-terminal domain"/>
    <property type="match status" value="1"/>
</dbReference>
<dbReference type="Gene3D" id="3.40.1190.10">
    <property type="entry name" value="Mur-like, catalytic domain"/>
    <property type="match status" value="1"/>
</dbReference>
<dbReference type="Gene3D" id="3.40.50.720">
    <property type="entry name" value="NAD(P)-binding Rossmann-like Domain"/>
    <property type="match status" value="1"/>
</dbReference>
<dbReference type="HAMAP" id="MF_00046">
    <property type="entry name" value="MurC"/>
    <property type="match status" value="1"/>
</dbReference>
<dbReference type="InterPro" id="IPR036565">
    <property type="entry name" value="Mur-like_cat_sf"/>
</dbReference>
<dbReference type="InterPro" id="IPR004101">
    <property type="entry name" value="Mur_ligase_C"/>
</dbReference>
<dbReference type="InterPro" id="IPR036615">
    <property type="entry name" value="Mur_ligase_C_dom_sf"/>
</dbReference>
<dbReference type="InterPro" id="IPR013221">
    <property type="entry name" value="Mur_ligase_cen"/>
</dbReference>
<dbReference type="InterPro" id="IPR000713">
    <property type="entry name" value="Mur_ligase_N"/>
</dbReference>
<dbReference type="InterPro" id="IPR050061">
    <property type="entry name" value="MurCDEF_pg_biosynth"/>
</dbReference>
<dbReference type="InterPro" id="IPR005758">
    <property type="entry name" value="UDP-N-AcMur_Ala_ligase_MurC"/>
</dbReference>
<dbReference type="NCBIfam" id="TIGR01082">
    <property type="entry name" value="murC"/>
    <property type="match status" value="1"/>
</dbReference>
<dbReference type="PANTHER" id="PTHR43445:SF3">
    <property type="entry name" value="UDP-N-ACETYLMURAMATE--L-ALANINE LIGASE"/>
    <property type="match status" value="1"/>
</dbReference>
<dbReference type="PANTHER" id="PTHR43445">
    <property type="entry name" value="UDP-N-ACETYLMURAMATE--L-ALANINE LIGASE-RELATED"/>
    <property type="match status" value="1"/>
</dbReference>
<dbReference type="Pfam" id="PF01225">
    <property type="entry name" value="Mur_ligase"/>
    <property type="match status" value="1"/>
</dbReference>
<dbReference type="Pfam" id="PF02875">
    <property type="entry name" value="Mur_ligase_C"/>
    <property type="match status" value="1"/>
</dbReference>
<dbReference type="Pfam" id="PF08245">
    <property type="entry name" value="Mur_ligase_M"/>
    <property type="match status" value="1"/>
</dbReference>
<dbReference type="SUPFAM" id="SSF51984">
    <property type="entry name" value="MurCD N-terminal domain"/>
    <property type="match status" value="1"/>
</dbReference>
<dbReference type="SUPFAM" id="SSF53623">
    <property type="entry name" value="MurD-like peptide ligases, catalytic domain"/>
    <property type="match status" value="1"/>
</dbReference>
<dbReference type="SUPFAM" id="SSF53244">
    <property type="entry name" value="MurD-like peptide ligases, peptide-binding domain"/>
    <property type="match status" value="1"/>
</dbReference>
<proteinExistence type="inferred from homology"/>
<keyword id="KW-0067">ATP-binding</keyword>
<keyword id="KW-0131">Cell cycle</keyword>
<keyword id="KW-0132">Cell division</keyword>
<keyword id="KW-0133">Cell shape</keyword>
<keyword id="KW-0961">Cell wall biogenesis/degradation</keyword>
<keyword id="KW-0963">Cytoplasm</keyword>
<keyword id="KW-0436">Ligase</keyword>
<keyword id="KW-0547">Nucleotide-binding</keyword>
<keyword id="KW-0573">Peptidoglycan synthesis</keyword>
<keyword id="KW-1185">Reference proteome</keyword>
<organism>
    <name type="scientific">Syntrophobacter fumaroxidans (strain DSM 10017 / MPOB)</name>
    <dbReference type="NCBI Taxonomy" id="335543"/>
    <lineage>
        <taxon>Bacteria</taxon>
        <taxon>Pseudomonadati</taxon>
        <taxon>Thermodesulfobacteriota</taxon>
        <taxon>Syntrophobacteria</taxon>
        <taxon>Syntrophobacterales</taxon>
        <taxon>Syntrophobacteraceae</taxon>
        <taxon>Syntrophobacter</taxon>
    </lineage>
</organism>
<comment type="function">
    <text evidence="1">Cell wall formation.</text>
</comment>
<comment type="catalytic activity">
    <reaction evidence="1">
        <text>UDP-N-acetyl-alpha-D-muramate + L-alanine + ATP = UDP-N-acetyl-alpha-D-muramoyl-L-alanine + ADP + phosphate + H(+)</text>
        <dbReference type="Rhea" id="RHEA:23372"/>
        <dbReference type="ChEBI" id="CHEBI:15378"/>
        <dbReference type="ChEBI" id="CHEBI:30616"/>
        <dbReference type="ChEBI" id="CHEBI:43474"/>
        <dbReference type="ChEBI" id="CHEBI:57972"/>
        <dbReference type="ChEBI" id="CHEBI:70757"/>
        <dbReference type="ChEBI" id="CHEBI:83898"/>
        <dbReference type="ChEBI" id="CHEBI:456216"/>
        <dbReference type="EC" id="6.3.2.8"/>
    </reaction>
</comment>
<comment type="pathway">
    <text evidence="1">Cell wall biogenesis; peptidoglycan biosynthesis.</text>
</comment>
<comment type="subcellular location">
    <subcellularLocation>
        <location evidence="1">Cytoplasm</location>
    </subcellularLocation>
</comment>
<comment type="similarity">
    <text evidence="1">Belongs to the MurCDEF family.</text>
</comment>
<feature type="chain" id="PRO_1000004430" description="UDP-N-acetylmuramate--L-alanine ligase">
    <location>
        <begin position="1"/>
        <end position="469"/>
    </location>
</feature>
<feature type="binding site" evidence="1">
    <location>
        <begin position="113"/>
        <end position="119"/>
    </location>
    <ligand>
        <name>ATP</name>
        <dbReference type="ChEBI" id="CHEBI:30616"/>
    </ligand>
</feature>
<reference key="1">
    <citation type="submission" date="2006-10" db="EMBL/GenBank/DDBJ databases">
        <title>Complete sequence of Syntrophobacter fumaroxidans MPOB.</title>
        <authorList>
            <consortium name="US DOE Joint Genome Institute"/>
            <person name="Copeland A."/>
            <person name="Lucas S."/>
            <person name="Lapidus A."/>
            <person name="Barry K."/>
            <person name="Detter J.C."/>
            <person name="Glavina del Rio T."/>
            <person name="Hammon N."/>
            <person name="Israni S."/>
            <person name="Pitluck S."/>
            <person name="Goltsman E.G."/>
            <person name="Martinez M."/>
            <person name="Schmutz J."/>
            <person name="Larimer F."/>
            <person name="Land M."/>
            <person name="Hauser L."/>
            <person name="Kyrpides N."/>
            <person name="Kim E."/>
            <person name="Boone D.R."/>
            <person name="Brockman F."/>
            <person name="Culley D."/>
            <person name="Ferry J."/>
            <person name="Gunsalus R."/>
            <person name="McInerney M.J."/>
            <person name="Morrison M."/>
            <person name="Plugge C."/>
            <person name="Rohlin L."/>
            <person name="Scholten J."/>
            <person name="Sieber J."/>
            <person name="Stams A.J.M."/>
            <person name="Worm P."/>
            <person name="Henstra A.M."/>
            <person name="Richardson P."/>
        </authorList>
    </citation>
    <scope>NUCLEOTIDE SEQUENCE [LARGE SCALE GENOMIC DNA]</scope>
    <source>
        <strain>DSM 10017 / MPOB</strain>
    </source>
</reference>
<sequence>MFKRYQHIHFVGIGGIGMSGIAELLLNLGYRVSGSDLKETEITRRLSAMGAAVHLGHRAEHVLGADVVVLSSAISDDNPENRAAREMGKVPVIRRAEMLAELMRLKYSVLVAGAHGKTTTTSMVSTVLARGGLDPTVVIGGKLNAWGTNAKLGNGDFMVAEADESDGTFLLLPPTIAVVTNIDLEHLDFYRDLAHIQETFLQFINKIPFYGQAVLCLEDENIQSILPRVEKRFTTYGFSSQADFQARDVRTSGLFSSYRVHSHGDELGEIEIRIPGRHNVLNSLAAVAVARELDLDWANIQDGLRDMTGVQRRFQIKGEAANVLVIDDYGHHPSEIRAVLQTLADCYPDRRRIVVFQPHRYTRTRALMEQFARCFYHSDVLLVTEIYAASETPIPGVTGERLSQEIASHGHHDLHFCETVESALSRLVKLVKPGDAVITLGAGNIWQVGEWLLAKLKSSGGSGGTGELK</sequence>